<keyword id="KW-0687">Ribonucleoprotein</keyword>
<keyword id="KW-0689">Ribosomal protein</keyword>
<keyword id="KW-0694">RNA-binding</keyword>
<keyword id="KW-0699">rRNA-binding</keyword>
<protein>
    <recommendedName>
        <fullName evidence="1">Large ribosomal subunit protein uL4</fullName>
    </recommendedName>
    <alternativeName>
        <fullName evidence="3">50S ribosomal protein L4</fullName>
    </alternativeName>
</protein>
<proteinExistence type="inferred from homology"/>
<feature type="chain" id="PRO_1000052368" description="Large ribosomal subunit protein uL4">
    <location>
        <begin position="1"/>
        <end position="206"/>
    </location>
</feature>
<feature type="region of interest" description="Disordered" evidence="2">
    <location>
        <begin position="45"/>
        <end position="85"/>
    </location>
</feature>
<feature type="compositionally biased region" description="Basic residues" evidence="2">
    <location>
        <begin position="58"/>
        <end position="70"/>
    </location>
</feature>
<name>RL4_BURM9</name>
<reference key="1">
    <citation type="journal article" date="2010" name="Genome Biol. Evol.">
        <title>Continuing evolution of Burkholderia mallei through genome reduction and large-scale rearrangements.</title>
        <authorList>
            <person name="Losada L."/>
            <person name="Ronning C.M."/>
            <person name="DeShazer D."/>
            <person name="Woods D."/>
            <person name="Fedorova N."/>
            <person name="Kim H.S."/>
            <person name="Shabalina S.A."/>
            <person name="Pearson T.R."/>
            <person name="Brinkac L."/>
            <person name="Tan P."/>
            <person name="Nandi T."/>
            <person name="Crabtree J."/>
            <person name="Badger J."/>
            <person name="Beckstrom-Sternberg S."/>
            <person name="Saqib M."/>
            <person name="Schutzer S.E."/>
            <person name="Keim P."/>
            <person name="Nierman W.C."/>
        </authorList>
    </citation>
    <scope>NUCLEOTIDE SEQUENCE [LARGE SCALE GENOMIC DNA]</scope>
    <source>
        <strain>NCTC 10229</strain>
    </source>
</reference>
<gene>
    <name evidence="1" type="primary">rplD</name>
    <name type="ordered locus">BMA10229_A1925</name>
</gene>
<evidence type="ECO:0000255" key="1">
    <source>
        <dbReference type="HAMAP-Rule" id="MF_01328"/>
    </source>
</evidence>
<evidence type="ECO:0000256" key="2">
    <source>
        <dbReference type="SAM" id="MobiDB-lite"/>
    </source>
</evidence>
<evidence type="ECO:0000305" key="3"/>
<comment type="function">
    <text evidence="1">One of the primary rRNA binding proteins, this protein initially binds near the 5'-end of the 23S rRNA. It is important during the early stages of 50S assembly. It makes multiple contacts with different domains of the 23S rRNA in the assembled 50S subunit and ribosome.</text>
</comment>
<comment type="function">
    <text evidence="1">Forms part of the polypeptide exit tunnel.</text>
</comment>
<comment type="subunit">
    <text evidence="1">Part of the 50S ribosomal subunit.</text>
</comment>
<comment type="similarity">
    <text evidence="1">Belongs to the universal ribosomal protein uL4 family.</text>
</comment>
<dbReference type="EMBL" id="CP000546">
    <property type="protein sequence ID" value="ABN02590.1"/>
    <property type="molecule type" value="Genomic_DNA"/>
</dbReference>
<dbReference type="RefSeq" id="WP_004199276.1">
    <property type="nucleotide sequence ID" value="NC_008836.1"/>
</dbReference>
<dbReference type="SMR" id="A2S7H7"/>
<dbReference type="GeneID" id="93061831"/>
<dbReference type="KEGG" id="bml:BMA10229_A1925"/>
<dbReference type="HOGENOM" id="CLU_041575_5_2_4"/>
<dbReference type="Proteomes" id="UP000002283">
    <property type="component" value="Chromosome I"/>
</dbReference>
<dbReference type="GO" id="GO:1990904">
    <property type="term" value="C:ribonucleoprotein complex"/>
    <property type="evidence" value="ECO:0007669"/>
    <property type="project" value="UniProtKB-KW"/>
</dbReference>
<dbReference type="GO" id="GO:0005840">
    <property type="term" value="C:ribosome"/>
    <property type="evidence" value="ECO:0007669"/>
    <property type="project" value="UniProtKB-KW"/>
</dbReference>
<dbReference type="GO" id="GO:0019843">
    <property type="term" value="F:rRNA binding"/>
    <property type="evidence" value="ECO:0007669"/>
    <property type="project" value="UniProtKB-UniRule"/>
</dbReference>
<dbReference type="GO" id="GO:0003735">
    <property type="term" value="F:structural constituent of ribosome"/>
    <property type="evidence" value="ECO:0007669"/>
    <property type="project" value="InterPro"/>
</dbReference>
<dbReference type="GO" id="GO:0006412">
    <property type="term" value="P:translation"/>
    <property type="evidence" value="ECO:0007669"/>
    <property type="project" value="UniProtKB-UniRule"/>
</dbReference>
<dbReference type="Gene3D" id="3.40.1370.10">
    <property type="match status" value="1"/>
</dbReference>
<dbReference type="HAMAP" id="MF_01328_B">
    <property type="entry name" value="Ribosomal_uL4_B"/>
    <property type="match status" value="1"/>
</dbReference>
<dbReference type="InterPro" id="IPR002136">
    <property type="entry name" value="Ribosomal_uL4"/>
</dbReference>
<dbReference type="InterPro" id="IPR013005">
    <property type="entry name" value="Ribosomal_uL4-like"/>
</dbReference>
<dbReference type="InterPro" id="IPR023574">
    <property type="entry name" value="Ribosomal_uL4_dom_sf"/>
</dbReference>
<dbReference type="NCBIfam" id="TIGR03953">
    <property type="entry name" value="rplD_bact"/>
    <property type="match status" value="1"/>
</dbReference>
<dbReference type="PANTHER" id="PTHR10746">
    <property type="entry name" value="50S RIBOSOMAL PROTEIN L4"/>
    <property type="match status" value="1"/>
</dbReference>
<dbReference type="PANTHER" id="PTHR10746:SF6">
    <property type="entry name" value="LARGE RIBOSOMAL SUBUNIT PROTEIN UL4M"/>
    <property type="match status" value="1"/>
</dbReference>
<dbReference type="Pfam" id="PF00573">
    <property type="entry name" value="Ribosomal_L4"/>
    <property type="match status" value="1"/>
</dbReference>
<dbReference type="SUPFAM" id="SSF52166">
    <property type="entry name" value="Ribosomal protein L4"/>
    <property type="match status" value="1"/>
</dbReference>
<accession>A2S7H7</accession>
<sequence>MELKLLNSNGQEGAVVNASDVVFGRDYNEALIHQVVVAYQANARQGNRAQKDREQVKHTTKKPWRQKGTGRARAGMSSSPLWRGGGRIFPNSPDENFSHKVNKKMHRAGLCSIFSQLAREGRLSVVEDIVLEAPKTKLLADKFKAMGLDSVLVITDTVDENLYLASRNLPHVAVVEPRYADPLSLIYFKKVLVTKAAVAQIEELLS</sequence>
<organism>
    <name type="scientific">Burkholderia mallei (strain NCTC 10229)</name>
    <dbReference type="NCBI Taxonomy" id="412022"/>
    <lineage>
        <taxon>Bacteria</taxon>
        <taxon>Pseudomonadati</taxon>
        <taxon>Pseudomonadota</taxon>
        <taxon>Betaproteobacteria</taxon>
        <taxon>Burkholderiales</taxon>
        <taxon>Burkholderiaceae</taxon>
        <taxon>Burkholderia</taxon>
        <taxon>pseudomallei group</taxon>
    </lineage>
</organism>